<evidence type="ECO:0000250" key="1"/>
<evidence type="ECO:0000255" key="2">
    <source>
        <dbReference type="PROSITE-ProRule" id="PRU00711"/>
    </source>
</evidence>
<evidence type="ECO:0000305" key="3"/>
<proteinExistence type="inferred from homology"/>
<accession>P0CY90</accession>
<accession>P16021</accession>
<sequence length="65" mass="6864">MAMKIDPELCTSCGDCEPVCPTNAIAPKKGVYVINADTCTECEGEHDLPQCVNACMTDNCINPAA</sequence>
<reference key="1">
    <citation type="journal article" date="1989" name="J. Bacteriol.">
        <title>Molecular cloning and sequence analysis of the structural gene of ferredoxin I from the photosynthetic bacterium Rhodobacter capsulatus.</title>
        <authorList>
            <person name="Schatt E."/>
            <person name="Jouanneau Y."/>
            <person name="Vignais P.M."/>
        </authorList>
    </citation>
    <scope>NUCLEOTIDE SEQUENCE [GENOMIC DNA]</scope>
    <source>
        <strain>ATCC 33303 / B10</strain>
    </source>
</reference>
<reference key="2">
    <citation type="journal article" date="1993" name="Mol. Gen. Genet.">
        <title>Identification of a new class of nitrogen fixation genes in Rhodobacter capsulatus: a putative membrane complex involved in electron transport to nitrogenase.</title>
        <authorList>
            <person name="Schmehl M."/>
            <person name="Jahn A."/>
            <person name="Meyer zu Vilsendorf A."/>
            <person name="Hennecke S."/>
            <person name="Masepohl B."/>
            <person name="Schuppler M."/>
            <person name="Marxer M."/>
            <person name="Oelze J."/>
            <person name="Klipp W."/>
        </authorList>
    </citation>
    <scope>NUCLEOTIDE SEQUENCE [GENOMIC DNA]</scope>
    <source>
        <strain>ATCC 33303 / B10</strain>
    </source>
</reference>
<reference key="3">
    <citation type="journal article" date="1991" name="J. Biol. Chem.">
        <title>A new [2Fe-2S] ferredoxin from Rhodobacter capsulatus. Coexpression with a 2[4Fe-4S] ferredoxin in Escherichia coli.</title>
        <authorList>
            <person name="Grabau C."/>
            <person name="Schatt E."/>
            <person name="Jouanneau Y."/>
            <person name="Vignais P.M."/>
        </authorList>
    </citation>
    <scope>NUCLEOTIDE SEQUENCE [GENOMIC DNA] OF 1-8</scope>
    <source>
        <strain>ATCC 33303 / B10</strain>
    </source>
</reference>
<keyword id="KW-0004">4Fe-4S</keyword>
<keyword id="KW-0249">Electron transport</keyword>
<keyword id="KW-0408">Iron</keyword>
<keyword id="KW-0411">Iron-sulfur</keyword>
<keyword id="KW-0479">Metal-binding</keyword>
<keyword id="KW-0535">Nitrogen fixation</keyword>
<keyword id="KW-0677">Repeat</keyword>
<keyword id="KW-0813">Transport</keyword>
<name>FDXN_RHOCA</name>
<protein>
    <recommendedName>
        <fullName>Ferredoxin-1</fullName>
    </recommendedName>
    <alternativeName>
        <fullName>Ferredoxin I</fullName>
        <shortName>FdI</shortName>
    </alternativeName>
</protein>
<feature type="initiator methionine" description="Removed" evidence="1">
    <location>
        <position position="1"/>
    </location>
</feature>
<feature type="chain" id="PRO_0000159170" description="Ferredoxin-1">
    <location>
        <begin position="2"/>
        <end position="65"/>
    </location>
</feature>
<feature type="domain" description="4Fe-4S ferredoxin-type" evidence="2">
    <location>
        <begin position="2"/>
        <end position="30"/>
    </location>
</feature>
<feature type="binding site" evidence="1">
    <location>
        <position position="10"/>
    </location>
    <ligand>
        <name>[4Fe-4S] cluster</name>
        <dbReference type="ChEBI" id="CHEBI:49883"/>
        <label>1</label>
    </ligand>
</feature>
<feature type="binding site" evidence="1">
    <location>
        <position position="13"/>
    </location>
    <ligand>
        <name>[4Fe-4S] cluster</name>
        <dbReference type="ChEBI" id="CHEBI:49883"/>
        <label>1</label>
    </ligand>
</feature>
<feature type="binding site" evidence="1">
    <location>
        <position position="16"/>
    </location>
    <ligand>
        <name>[4Fe-4S] cluster</name>
        <dbReference type="ChEBI" id="CHEBI:49883"/>
        <label>1</label>
    </ligand>
</feature>
<feature type="binding site" evidence="1">
    <location>
        <position position="20"/>
    </location>
    <ligand>
        <name>[4Fe-4S] cluster</name>
        <dbReference type="ChEBI" id="CHEBI:49883"/>
        <label>2</label>
    </ligand>
</feature>
<feature type="binding site" evidence="1">
    <location>
        <position position="39"/>
    </location>
    <ligand>
        <name>[4Fe-4S] cluster</name>
        <dbReference type="ChEBI" id="CHEBI:49883"/>
        <label>2</label>
    </ligand>
</feature>
<feature type="binding site" evidence="1">
    <location>
        <position position="42"/>
    </location>
    <ligand>
        <name>[4Fe-4S] cluster</name>
        <dbReference type="ChEBI" id="CHEBI:49883"/>
        <label>2</label>
    </ligand>
</feature>
<feature type="binding site" evidence="1">
    <location>
        <position position="51"/>
    </location>
    <ligand>
        <name>[4Fe-4S] cluster</name>
        <dbReference type="ChEBI" id="CHEBI:49883"/>
        <label>2</label>
    </ligand>
</feature>
<feature type="binding site" evidence="1">
    <location>
        <position position="55"/>
    </location>
    <ligand>
        <name>[4Fe-4S] cluster</name>
        <dbReference type="ChEBI" id="CHEBI:49883"/>
        <label>1</label>
    </ligand>
</feature>
<dbReference type="EMBL" id="M31073">
    <property type="protein sequence ID" value="AAA26111.1"/>
    <property type="molecule type" value="Genomic_DNA"/>
</dbReference>
<dbReference type="EMBL" id="X72888">
    <property type="protein sequence ID" value="CAA51404.1"/>
    <property type="molecule type" value="Genomic_DNA"/>
</dbReference>
<dbReference type="EMBL" id="M59855">
    <property type="protein sequence ID" value="AAA26110.1"/>
    <property type="molecule type" value="Genomic_DNA"/>
</dbReference>
<dbReference type="PIR" id="A33498">
    <property type="entry name" value="FERF1C"/>
</dbReference>
<dbReference type="RefSeq" id="WP_013068980.1">
    <property type="nucleotide sequence ID" value="NZ_VIBE01000016.1"/>
</dbReference>
<dbReference type="SMR" id="P0CY90"/>
<dbReference type="GeneID" id="31492064"/>
<dbReference type="OMA" id="NDMYIID"/>
<dbReference type="GO" id="GO:0051539">
    <property type="term" value="F:4 iron, 4 sulfur cluster binding"/>
    <property type="evidence" value="ECO:0007669"/>
    <property type="project" value="UniProtKB-KW"/>
</dbReference>
<dbReference type="GO" id="GO:0046872">
    <property type="term" value="F:metal ion binding"/>
    <property type="evidence" value="ECO:0007669"/>
    <property type="project" value="UniProtKB-KW"/>
</dbReference>
<dbReference type="GO" id="GO:0009399">
    <property type="term" value="P:nitrogen fixation"/>
    <property type="evidence" value="ECO:0007669"/>
    <property type="project" value="UniProtKB-KW"/>
</dbReference>
<dbReference type="Gene3D" id="3.30.70.20">
    <property type="match status" value="1"/>
</dbReference>
<dbReference type="InterPro" id="IPR017896">
    <property type="entry name" value="4Fe4S_Fe-S-bd"/>
</dbReference>
<dbReference type="InterPro" id="IPR017900">
    <property type="entry name" value="4Fe4S_Fe_S_CS"/>
</dbReference>
<dbReference type="Pfam" id="PF00037">
    <property type="entry name" value="Fer4"/>
    <property type="match status" value="1"/>
</dbReference>
<dbReference type="SUPFAM" id="SSF54862">
    <property type="entry name" value="4Fe-4S ferredoxins"/>
    <property type="match status" value="1"/>
</dbReference>
<dbReference type="PROSITE" id="PS00198">
    <property type="entry name" value="4FE4S_FER_1"/>
    <property type="match status" value="1"/>
</dbReference>
<dbReference type="PROSITE" id="PS51379">
    <property type="entry name" value="4FE4S_FER_2"/>
    <property type="match status" value="1"/>
</dbReference>
<organism>
    <name type="scientific">Rhodobacter capsulatus</name>
    <name type="common">Rhodopseudomonas capsulata</name>
    <dbReference type="NCBI Taxonomy" id="1061"/>
    <lineage>
        <taxon>Bacteria</taxon>
        <taxon>Pseudomonadati</taxon>
        <taxon>Pseudomonadota</taxon>
        <taxon>Alphaproteobacteria</taxon>
        <taxon>Rhodobacterales</taxon>
        <taxon>Rhodobacter group</taxon>
        <taxon>Rhodobacter</taxon>
    </lineage>
</organism>
<gene>
    <name type="primary">fdxN</name>
</gene>
<comment type="function">
    <text>Ferredoxins are iron-sulfur proteins that transfer electrons in a wide variety of metabolic reactions. This ferredoxin probably participates in nitrogen fixation.</text>
</comment>
<comment type="cofactor">
    <cofactor evidence="3">
        <name>[4Fe-4S] cluster</name>
        <dbReference type="ChEBI" id="CHEBI:49883"/>
    </cofactor>
    <text evidence="3">Binds 2 [4Fe-4S] clusters.</text>
</comment>